<feature type="chain" id="PRO_0000237317" description="DNA-directed RNA polymerase subunit beta">
    <location>
        <begin position="1"/>
        <end position="1097"/>
    </location>
</feature>
<feature type="region of interest" description="Disordered" evidence="2">
    <location>
        <begin position="1072"/>
        <end position="1097"/>
    </location>
</feature>
<dbReference type="EC" id="2.7.7.6" evidence="1"/>
<dbReference type="EMBL" id="CP000097">
    <property type="protein sequence ID" value="ABB25573.1"/>
    <property type="molecule type" value="Genomic_DNA"/>
</dbReference>
<dbReference type="RefSeq" id="WP_011359418.1">
    <property type="nucleotide sequence ID" value="NC_007513.1"/>
</dbReference>
<dbReference type="SMR" id="Q3AZA4"/>
<dbReference type="STRING" id="316279.Syncc9902_0605"/>
<dbReference type="KEGG" id="sye:Syncc9902_0605"/>
<dbReference type="eggNOG" id="COG0085">
    <property type="taxonomic scope" value="Bacteria"/>
</dbReference>
<dbReference type="HOGENOM" id="CLU_000524_4_1_3"/>
<dbReference type="OrthoDB" id="9803954at2"/>
<dbReference type="Proteomes" id="UP000002712">
    <property type="component" value="Chromosome"/>
</dbReference>
<dbReference type="GO" id="GO:0000428">
    <property type="term" value="C:DNA-directed RNA polymerase complex"/>
    <property type="evidence" value="ECO:0007669"/>
    <property type="project" value="UniProtKB-KW"/>
</dbReference>
<dbReference type="GO" id="GO:0003677">
    <property type="term" value="F:DNA binding"/>
    <property type="evidence" value="ECO:0007669"/>
    <property type="project" value="UniProtKB-UniRule"/>
</dbReference>
<dbReference type="GO" id="GO:0003899">
    <property type="term" value="F:DNA-directed RNA polymerase activity"/>
    <property type="evidence" value="ECO:0007669"/>
    <property type="project" value="UniProtKB-UniRule"/>
</dbReference>
<dbReference type="GO" id="GO:0032549">
    <property type="term" value="F:ribonucleoside binding"/>
    <property type="evidence" value="ECO:0007669"/>
    <property type="project" value="InterPro"/>
</dbReference>
<dbReference type="GO" id="GO:0006351">
    <property type="term" value="P:DNA-templated transcription"/>
    <property type="evidence" value="ECO:0007669"/>
    <property type="project" value="UniProtKB-UniRule"/>
</dbReference>
<dbReference type="CDD" id="cd00653">
    <property type="entry name" value="RNA_pol_B_RPB2"/>
    <property type="match status" value="1"/>
</dbReference>
<dbReference type="FunFam" id="3.90.1800.10:FF:000001">
    <property type="entry name" value="DNA-directed RNA polymerase subunit beta"/>
    <property type="match status" value="1"/>
</dbReference>
<dbReference type="Gene3D" id="2.40.50.100">
    <property type="match status" value="1"/>
</dbReference>
<dbReference type="Gene3D" id="2.40.50.150">
    <property type="match status" value="1"/>
</dbReference>
<dbReference type="Gene3D" id="3.90.1100.10">
    <property type="match status" value="1"/>
</dbReference>
<dbReference type="Gene3D" id="2.30.150.10">
    <property type="entry name" value="DNA-directed RNA polymerase, beta subunit, external 1 domain"/>
    <property type="match status" value="1"/>
</dbReference>
<dbReference type="Gene3D" id="2.40.270.10">
    <property type="entry name" value="DNA-directed RNA polymerase, subunit 2, domain 6"/>
    <property type="match status" value="1"/>
</dbReference>
<dbReference type="Gene3D" id="3.90.1800.10">
    <property type="entry name" value="RNA polymerase alpha subunit dimerisation domain"/>
    <property type="match status" value="1"/>
</dbReference>
<dbReference type="Gene3D" id="3.90.1110.10">
    <property type="entry name" value="RNA polymerase Rpb2, domain 2"/>
    <property type="match status" value="1"/>
</dbReference>
<dbReference type="HAMAP" id="MF_01321">
    <property type="entry name" value="RNApol_bact_RpoB"/>
    <property type="match status" value="1"/>
</dbReference>
<dbReference type="InterPro" id="IPR042107">
    <property type="entry name" value="DNA-dir_RNA_pol_bsu_ext_1_sf"/>
</dbReference>
<dbReference type="InterPro" id="IPR019462">
    <property type="entry name" value="DNA-dir_RNA_pol_bsu_external_1"/>
</dbReference>
<dbReference type="InterPro" id="IPR015712">
    <property type="entry name" value="DNA-dir_RNA_pol_su2"/>
</dbReference>
<dbReference type="InterPro" id="IPR007120">
    <property type="entry name" value="DNA-dir_RNAP_su2_dom"/>
</dbReference>
<dbReference type="InterPro" id="IPR037033">
    <property type="entry name" value="DNA-dir_RNAP_su2_hyb_sf"/>
</dbReference>
<dbReference type="InterPro" id="IPR010243">
    <property type="entry name" value="RNA_pol_bsu_bac"/>
</dbReference>
<dbReference type="InterPro" id="IPR007121">
    <property type="entry name" value="RNA_pol_bsu_CS"/>
</dbReference>
<dbReference type="InterPro" id="IPR007644">
    <property type="entry name" value="RNA_pol_bsu_protrusion"/>
</dbReference>
<dbReference type="InterPro" id="IPR007642">
    <property type="entry name" value="RNA_pol_Rpb2_2"/>
</dbReference>
<dbReference type="InterPro" id="IPR037034">
    <property type="entry name" value="RNA_pol_Rpb2_2_sf"/>
</dbReference>
<dbReference type="InterPro" id="IPR007645">
    <property type="entry name" value="RNA_pol_Rpb2_3"/>
</dbReference>
<dbReference type="InterPro" id="IPR007641">
    <property type="entry name" value="RNA_pol_Rpb2_7"/>
</dbReference>
<dbReference type="InterPro" id="IPR014724">
    <property type="entry name" value="RNA_pol_RPB2_OB-fold"/>
</dbReference>
<dbReference type="NCBIfam" id="NF001616">
    <property type="entry name" value="PRK00405.1"/>
    <property type="match status" value="1"/>
</dbReference>
<dbReference type="NCBIfam" id="TIGR02013">
    <property type="entry name" value="rpoB"/>
    <property type="match status" value="1"/>
</dbReference>
<dbReference type="PANTHER" id="PTHR20856">
    <property type="entry name" value="DNA-DIRECTED RNA POLYMERASE I SUBUNIT 2"/>
    <property type="match status" value="1"/>
</dbReference>
<dbReference type="Pfam" id="PF04563">
    <property type="entry name" value="RNA_pol_Rpb2_1"/>
    <property type="match status" value="1"/>
</dbReference>
<dbReference type="Pfam" id="PF04561">
    <property type="entry name" value="RNA_pol_Rpb2_2"/>
    <property type="match status" value="1"/>
</dbReference>
<dbReference type="Pfam" id="PF04565">
    <property type="entry name" value="RNA_pol_Rpb2_3"/>
    <property type="match status" value="1"/>
</dbReference>
<dbReference type="Pfam" id="PF10385">
    <property type="entry name" value="RNA_pol_Rpb2_45"/>
    <property type="match status" value="1"/>
</dbReference>
<dbReference type="Pfam" id="PF00562">
    <property type="entry name" value="RNA_pol_Rpb2_6"/>
    <property type="match status" value="1"/>
</dbReference>
<dbReference type="Pfam" id="PF04560">
    <property type="entry name" value="RNA_pol_Rpb2_7"/>
    <property type="match status" value="1"/>
</dbReference>
<dbReference type="SUPFAM" id="SSF64484">
    <property type="entry name" value="beta and beta-prime subunits of DNA dependent RNA-polymerase"/>
    <property type="match status" value="1"/>
</dbReference>
<dbReference type="PROSITE" id="PS01166">
    <property type="entry name" value="RNA_POL_BETA"/>
    <property type="match status" value="1"/>
</dbReference>
<protein>
    <recommendedName>
        <fullName evidence="1">DNA-directed RNA polymerase subunit beta</fullName>
        <shortName evidence="1">RNAP subunit beta</shortName>
        <ecNumber evidence="1">2.7.7.6</ecNumber>
    </recommendedName>
    <alternativeName>
        <fullName evidence="1">RNA polymerase subunit beta</fullName>
    </alternativeName>
    <alternativeName>
        <fullName evidence="1">Transcriptase subunit beta</fullName>
    </alternativeName>
</protein>
<organism>
    <name type="scientific">Synechococcus sp. (strain CC9902)</name>
    <dbReference type="NCBI Taxonomy" id="316279"/>
    <lineage>
        <taxon>Bacteria</taxon>
        <taxon>Bacillati</taxon>
        <taxon>Cyanobacteriota</taxon>
        <taxon>Cyanophyceae</taxon>
        <taxon>Synechococcales</taxon>
        <taxon>Synechococcaceae</taxon>
        <taxon>Synechococcus</taxon>
    </lineage>
</organism>
<evidence type="ECO:0000255" key="1">
    <source>
        <dbReference type="HAMAP-Rule" id="MF_01321"/>
    </source>
</evidence>
<evidence type="ECO:0000256" key="2">
    <source>
        <dbReference type="SAM" id="MobiDB-lite"/>
    </source>
</evidence>
<comment type="function">
    <text evidence="1">DNA-dependent RNA polymerase catalyzes the transcription of DNA into RNA using the four ribonucleoside triphosphates as substrates.</text>
</comment>
<comment type="catalytic activity">
    <reaction evidence="1">
        <text>RNA(n) + a ribonucleoside 5'-triphosphate = RNA(n+1) + diphosphate</text>
        <dbReference type="Rhea" id="RHEA:21248"/>
        <dbReference type="Rhea" id="RHEA-COMP:14527"/>
        <dbReference type="Rhea" id="RHEA-COMP:17342"/>
        <dbReference type="ChEBI" id="CHEBI:33019"/>
        <dbReference type="ChEBI" id="CHEBI:61557"/>
        <dbReference type="ChEBI" id="CHEBI:140395"/>
        <dbReference type="EC" id="2.7.7.6"/>
    </reaction>
</comment>
<comment type="subunit">
    <text evidence="1">In cyanobacteria the RNAP catalytic core is composed of 2 alpha, 1 beta, 1 beta', 1 gamma and 1 omega subunit. When a sigma factor is associated with the core the holoenzyme is formed, which can initiate transcription.</text>
</comment>
<comment type="similarity">
    <text evidence="1">Belongs to the RNA polymerase beta chain family.</text>
</comment>
<name>RPOB_SYNS9</name>
<gene>
    <name evidence="1" type="primary">rpoB</name>
    <name type="ordered locus">Syncc9902_0605</name>
</gene>
<sequence length="1097" mass="122399">MSSSAIQVAKTATFLPDLVEVQRASFKWFLDKGLIEELESFSPITDYTGKLELHFIGSEYRLKRPRHDVEEAKRRDATFASQMYVTCRLVNKETGEIKEQEVFIGELPLMTERGTFIINGAERVIVNQIVRSPGVYFKDEMDKNGRRTYNASVIPNRGAWLKFETDKNDLLHVRVDKTRKINAHVLMRAMGLSDNDVLDKLRHPEFYKKSIDAANDEGISSEDQALLELYKKLRPGEPPSVSGGQQLLQTRFFDAKRYDLGRVGRYKINKKLRLTIPDTVRTLTHEDVLSTLDYLINLELDVGGASLDDIDHLGNRRVRSVGELLQNQVRVGLNRLERIIKERMTVGETDSLTPAQLVNPKPLVAAIKEFFGSSQLSQFMDQTNPLAELTHKRRISALGPGGLTRERAGFAVRDIHPSHYGRLCPIETPEGPNAGLINSLATHARVNEYGFIETPFWKVENGVVIKSGDPIYLSADREDEVRVAPGDVATEDNGEIKADLIPVRYRQDFEKVPPEQVDYVALSPVQVISVATSLIPFLEHDDANRALMGSNMQRQAVPLLRPERALVGTGLETQVARDSGMVPISRVNGTVVYVDANAIVVLDEDGQEHTHFLQKYQRSNQDTCLNQRPIVHQGDPVIVGQVLADGSACEGGEIALGQNVLIAYMPWEGYNYEDALLVSERLVTDDLYTSVHIEKYEIEARQTKLGPEEITREIPNVAEESLGNLDEMGIIRVGAFVESGDILVGKVTPKGESDQPPEEKLLRAIFGEKARDVRDNSLRVPGTERGRVVDVRIYTREQGDELPPGANMVVRVYVAQRRKIQVGDKMAGRHGNKGIISRILPREDMPYLPDGTPVDIVLNPLGVPSRMNVGQVFELLMGWAASNLDCRVKIIPFDEMHGAEKSQQTVTTFLTEAAKLSGKDWVYNPENPGKLVLRDGRTGLPFDQPVAVGYSHFLKLVHLVDDKIHARSTGPYSLVTQQPLGGKAQQGGQRLGEMEVWALEAYGAAYTLQELLTVKSDDMQGRNEALNAIVKGKPIPRPGTPESFKVLMRELQSLGLDIAVYTEEGKEVDLMQDVNPRRSTPSRPTYESLGVADYDED</sequence>
<proteinExistence type="inferred from homology"/>
<accession>Q3AZA4</accession>
<keyword id="KW-0240">DNA-directed RNA polymerase</keyword>
<keyword id="KW-0548">Nucleotidyltransferase</keyword>
<keyword id="KW-1185">Reference proteome</keyword>
<keyword id="KW-0804">Transcription</keyword>
<keyword id="KW-0808">Transferase</keyword>
<reference key="1">
    <citation type="submission" date="2005-08" db="EMBL/GenBank/DDBJ databases">
        <title>Complete sequence of Synechococcus sp. CC9902.</title>
        <authorList>
            <person name="Copeland A."/>
            <person name="Lucas S."/>
            <person name="Lapidus A."/>
            <person name="Barry K."/>
            <person name="Detter J.C."/>
            <person name="Glavina T."/>
            <person name="Hammon N."/>
            <person name="Israni S."/>
            <person name="Pitluck S."/>
            <person name="Martinez M."/>
            <person name="Schmutz J."/>
            <person name="Larimer F."/>
            <person name="Land M."/>
            <person name="Kyrpides N."/>
            <person name="Ivanova N."/>
            <person name="Richardson P."/>
        </authorList>
    </citation>
    <scope>NUCLEOTIDE SEQUENCE [LARGE SCALE GENOMIC DNA]</scope>
    <source>
        <strain>CC9902</strain>
    </source>
</reference>